<proteinExistence type="inferred from homology"/>
<comment type="function">
    <text evidence="1">DEAD-box RNA helicase-like protein required for pre-18S rRNA processing, specifically at sites A0, A1, and A2.</text>
</comment>
<comment type="subunit">
    <text evidence="1">Component of the ribosomal small subunit (SSU) processome composed of at least 40 protein subunits and snoRNA U3.</text>
</comment>
<comment type="subcellular location">
    <subcellularLocation>
        <location evidence="1">Nucleus</location>
        <location evidence="1">Nucleolus</location>
    </subcellularLocation>
</comment>
<comment type="similarity">
    <text evidence="3">Belongs to the UTP25 family.</text>
</comment>
<gene>
    <name type="primary">UTP25</name>
    <name type="ORF">CPC735_034700</name>
</gene>
<protein>
    <recommendedName>
        <fullName>U3 small nucleolar RNA-associated protein 25</fullName>
        <shortName>U3 snoRNA-associated protein 25</shortName>
    </recommendedName>
    <alternativeName>
        <fullName>U three protein 25</fullName>
    </alternativeName>
</protein>
<name>UTP25_COCP7</name>
<reference key="1">
    <citation type="journal article" date="2009" name="Genome Res.">
        <title>Comparative genomic analyses of the human fungal pathogens Coccidioides and their relatives.</title>
        <authorList>
            <person name="Sharpton T.J."/>
            <person name="Stajich J.E."/>
            <person name="Rounsley S.D."/>
            <person name="Gardner M.J."/>
            <person name="Wortman J.R."/>
            <person name="Jordar V.S."/>
            <person name="Maiti R."/>
            <person name="Kodira C.D."/>
            <person name="Neafsey D.E."/>
            <person name="Zeng Q."/>
            <person name="Hung C.-Y."/>
            <person name="McMahan C."/>
            <person name="Muszewska A."/>
            <person name="Grynberg M."/>
            <person name="Mandel M.A."/>
            <person name="Kellner E.M."/>
            <person name="Barker B.M."/>
            <person name="Galgiani J.N."/>
            <person name="Orbach M.J."/>
            <person name="Kirkland T.N."/>
            <person name="Cole G.T."/>
            <person name="Henn M.R."/>
            <person name="Birren B.W."/>
            <person name="Taylor J.W."/>
        </authorList>
    </citation>
    <scope>NUCLEOTIDE SEQUENCE [LARGE SCALE GENOMIC DNA]</scope>
    <source>
        <strain>C735</strain>
    </source>
</reference>
<accession>C5P5Z4</accession>
<evidence type="ECO:0000250" key="1"/>
<evidence type="ECO:0000256" key="2">
    <source>
        <dbReference type="SAM" id="MobiDB-lite"/>
    </source>
</evidence>
<evidence type="ECO:0000305" key="3"/>
<dbReference type="EMBL" id="ACFW01000025">
    <property type="protein sequence ID" value="EER28134.1"/>
    <property type="molecule type" value="Genomic_DNA"/>
</dbReference>
<dbReference type="RefSeq" id="XP_003070279.1">
    <property type="nucleotide sequence ID" value="XM_003070233.1"/>
</dbReference>
<dbReference type="GeneID" id="9695774"/>
<dbReference type="KEGG" id="cpw:9695774"/>
<dbReference type="VEuPathDB" id="FungiDB:CPC735_034700"/>
<dbReference type="HOGENOM" id="CLU_018705_0_1_1"/>
<dbReference type="OrthoDB" id="10264378at2759"/>
<dbReference type="Proteomes" id="UP000009084">
    <property type="component" value="Unassembled WGS sequence"/>
</dbReference>
<dbReference type="GO" id="GO:0005730">
    <property type="term" value="C:nucleolus"/>
    <property type="evidence" value="ECO:0007669"/>
    <property type="project" value="UniProtKB-SubCell"/>
</dbReference>
<dbReference type="GO" id="GO:0032040">
    <property type="term" value="C:small-subunit processome"/>
    <property type="evidence" value="ECO:0007669"/>
    <property type="project" value="TreeGrafter"/>
</dbReference>
<dbReference type="GO" id="GO:0019843">
    <property type="term" value="F:rRNA binding"/>
    <property type="evidence" value="ECO:0007669"/>
    <property type="project" value="TreeGrafter"/>
</dbReference>
<dbReference type="GO" id="GO:0034511">
    <property type="term" value="F:U3 snoRNA binding"/>
    <property type="evidence" value="ECO:0007669"/>
    <property type="project" value="InterPro"/>
</dbReference>
<dbReference type="GO" id="GO:0000462">
    <property type="term" value="P:maturation of SSU-rRNA from tricistronic rRNA transcript (SSU-rRNA, 5.8S rRNA, LSU-rRNA)"/>
    <property type="evidence" value="ECO:0007669"/>
    <property type="project" value="TreeGrafter"/>
</dbReference>
<dbReference type="FunFam" id="3.40.50.300:FF:002356">
    <property type="entry name" value="U3 small nucleolar RNA-associated protein 25"/>
    <property type="match status" value="1"/>
</dbReference>
<dbReference type="Gene3D" id="3.40.50.300">
    <property type="entry name" value="P-loop containing nucleotide triphosphate hydrolases"/>
    <property type="match status" value="1"/>
</dbReference>
<dbReference type="InterPro" id="IPR027417">
    <property type="entry name" value="P-loop_NTPase"/>
</dbReference>
<dbReference type="InterPro" id="IPR010678">
    <property type="entry name" value="UTP25"/>
</dbReference>
<dbReference type="InterPro" id="IPR053939">
    <property type="entry name" value="UTP25_C"/>
</dbReference>
<dbReference type="InterPro" id="IPR053940">
    <property type="entry name" value="UTP25_NTPase-like"/>
</dbReference>
<dbReference type="PANTHER" id="PTHR12933">
    <property type="entry name" value="ORF PROTEIN-RELATED"/>
    <property type="match status" value="1"/>
</dbReference>
<dbReference type="PANTHER" id="PTHR12933:SF0">
    <property type="entry name" value="U3 SMALL NUCLEOLAR RNA-ASSOCIATED PROTEIN 25 HOMOLOG"/>
    <property type="match status" value="1"/>
</dbReference>
<dbReference type="Pfam" id="PF06862">
    <property type="entry name" value="Utp25_C"/>
    <property type="match status" value="1"/>
</dbReference>
<dbReference type="Pfam" id="PF22916">
    <property type="entry name" value="UTP25_NTPase-like"/>
    <property type="match status" value="1"/>
</dbReference>
<dbReference type="SUPFAM" id="SSF52540">
    <property type="entry name" value="P-loop containing nucleoside triphosphate hydrolases"/>
    <property type="match status" value="1"/>
</dbReference>
<keyword id="KW-0539">Nucleus</keyword>
<keyword id="KW-0687">Ribonucleoprotein</keyword>
<keyword id="KW-0690">Ribosome biogenesis</keyword>
<keyword id="KW-0698">rRNA processing</keyword>
<sequence length="717" mass="81160">MAVKGAHARRGPPRRKLPKFETSRVQDLDQDNSPSEGPDAFDNESLDEASDAEYSVVSSDSAEEERLTAKPYNALLQLLNVGADPNGPARKKRKLKHKNKDNGKEDQVDKVKRSIPREVDSELQDDLDVKEASDDESESGDENDGIDEADRDAAAGSDPFEAHFSQPDEARLSKRIEASTKTWQTSKHQLSSGMRITATYPYAGNEQSLALPPLHSLKDLPLKRKLSETASEHMSQINAQNSSIAPYIFGYYDMLYGARTTENAASLRDMYCLHALNHIIKTRDRVVKNNSRVPKEGEDVEMRDQGFTRPKVLILLPTRQACVRVVDSISKFYRADQQENKKRFLETFSETDDKSWEDKPEDFQELFGGNDDDMFRLGLKFTRKTMKYFTQFYNSDIILASPLGLRTAMEKEDGKKQEYDFLSSIELVVVDHADALLMQNWDHVEYVFSHLNLQPKAAHGCDFSRVRTWYLDGNAKYLRQTLIFTSFMSPEINSVYSTYAQNVSGKVKINTTYQGAILDLPVPVPVKQTFSRFDSLSPVKDPETRFKYFTNTVLSSLAKNWSGSGKSSASGTLIFIPSYLDFVRIRNYLATSSQTTNLSFGAISEYTSVRDVARARSYFMNGRHSVLLYTERLHHFRRYKIRGVKRVIMYGVPDNPLFYGEIVAFLGLDPSAVGEAAEKGVRALFSKWDALKLERVVGTKRIGSMMMEKGGDTFTFT</sequence>
<feature type="chain" id="PRO_0000408114" description="U3 small nucleolar RNA-associated protein 25">
    <location>
        <begin position="1"/>
        <end position="717"/>
    </location>
</feature>
<feature type="region of interest" description="Disordered" evidence="2">
    <location>
        <begin position="1"/>
        <end position="170"/>
    </location>
</feature>
<feature type="compositionally biased region" description="Basic residues" evidence="2">
    <location>
        <begin position="1"/>
        <end position="17"/>
    </location>
</feature>
<feature type="compositionally biased region" description="Basic and acidic residues" evidence="2">
    <location>
        <begin position="18"/>
        <end position="27"/>
    </location>
</feature>
<feature type="compositionally biased region" description="Acidic residues" evidence="2">
    <location>
        <begin position="39"/>
        <end position="51"/>
    </location>
</feature>
<feature type="compositionally biased region" description="Basic residues" evidence="2">
    <location>
        <begin position="89"/>
        <end position="99"/>
    </location>
</feature>
<feature type="compositionally biased region" description="Basic and acidic residues" evidence="2">
    <location>
        <begin position="100"/>
        <end position="120"/>
    </location>
</feature>
<feature type="compositionally biased region" description="Acidic residues" evidence="2">
    <location>
        <begin position="133"/>
        <end position="150"/>
    </location>
</feature>
<organism>
    <name type="scientific">Coccidioides posadasii (strain C735)</name>
    <name type="common">Valley fever fungus</name>
    <dbReference type="NCBI Taxonomy" id="222929"/>
    <lineage>
        <taxon>Eukaryota</taxon>
        <taxon>Fungi</taxon>
        <taxon>Dikarya</taxon>
        <taxon>Ascomycota</taxon>
        <taxon>Pezizomycotina</taxon>
        <taxon>Eurotiomycetes</taxon>
        <taxon>Eurotiomycetidae</taxon>
        <taxon>Onygenales</taxon>
        <taxon>Onygenaceae</taxon>
        <taxon>Coccidioides</taxon>
    </lineage>
</organism>